<dbReference type="EC" id="2.5.1.6" evidence="1"/>
<dbReference type="EMBL" id="CP000248">
    <property type="protein sequence ID" value="ABD24732.1"/>
    <property type="molecule type" value="Genomic_DNA"/>
</dbReference>
<dbReference type="RefSeq" id="WP_011443946.1">
    <property type="nucleotide sequence ID" value="NC_007794.1"/>
</dbReference>
<dbReference type="SMR" id="Q2GBP1"/>
<dbReference type="STRING" id="279238.Saro_0284"/>
<dbReference type="KEGG" id="nar:Saro_0284"/>
<dbReference type="eggNOG" id="COG0192">
    <property type="taxonomic scope" value="Bacteria"/>
</dbReference>
<dbReference type="HOGENOM" id="CLU_041802_1_1_5"/>
<dbReference type="UniPathway" id="UPA00315">
    <property type="reaction ID" value="UER00080"/>
</dbReference>
<dbReference type="Proteomes" id="UP000009134">
    <property type="component" value="Chromosome"/>
</dbReference>
<dbReference type="GO" id="GO:0005737">
    <property type="term" value="C:cytoplasm"/>
    <property type="evidence" value="ECO:0007669"/>
    <property type="project" value="UniProtKB-SubCell"/>
</dbReference>
<dbReference type="GO" id="GO:0005524">
    <property type="term" value="F:ATP binding"/>
    <property type="evidence" value="ECO:0007669"/>
    <property type="project" value="UniProtKB-UniRule"/>
</dbReference>
<dbReference type="GO" id="GO:0000287">
    <property type="term" value="F:magnesium ion binding"/>
    <property type="evidence" value="ECO:0007669"/>
    <property type="project" value="UniProtKB-UniRule"/>
</dbReference>
<dbReference type="GO" id="GO:0004478">
    <property type="term" value="F:methionine adenosyltransferase activity"/>
    <property type="evidence" value="ECO:0007669"/>
    <property type="project" value="UniProtKB-UniRule"/>
</dbReference>
<dbReference type="GO" id="GO:0006730">
    <property type="term" value="P:one-carbon metabolic process"/>
    <property type="evidence" value="ECO:0007669"/>
    <property type="project" value="UniProtKB-KW"/>
</dbReference>
<dbReference type="GO" id="GO:0006556">
    <property type="term" value="P:S-adenosylmethionine biosynthetic process"/>
    <property type="evidence" value="ECO:0007669"/>
    <property type="project" value="UniProtKB-UniRule"/>
</dbReference>
<dbReference type="CDD" id="cd18079">
    <property type="entry name" value="S-AdoMet_synt"/>
    <property type="match status" value="1"/>
</dbReference>
<dbReference type="Gene3D" id="3.30.300.10">
    <property type="match status" value="3"/>
</dbReference>
<dbReference type="HAMAP" id="MF_00086">
    <property type="entry name" value="S_AdoMet_synth1"/>
    <property type="match status" value="1"/>
</dbReference>
<dbReference type="InterPro" id="IPR022631">
    <property type="entry name" value="ADOMET_SYNTHASE_CS"/>
</dbReference>
<dbReference type="InterPro" id="IPR022630">
    <property type="entry name" value="S-AdoMet_synt_C"/>
</dbReference>
<dbReference type="InterPro" id="IPR022629">
    <property type="entry name" value="S-AdoMet_synt_central"/>
</dbReference>
<dbReference type="InterPro" id="IPR022628">
    <property type="entry name" value="S-AdoMet_synt_N"/>
</dbReference>
<dbReference type="InterPro" id="IPR002133">
    <property type="entry name" value="S-AdoMet_synthetase"/>
</dbReference>
<dbReference type="InterPro" id="IPR022636">
    <property type="entry name" value="S-AdoMet_synthetase_sfam"/>
</dbReference>
<dbReference type="NCBIfam" id="TIGR01034">
    <property type="entry name" value="metK"/>
    <property type="match status" value="1"/>
</dbReference>
<dbReference type="PANTHER" id="PTHR11964">
    <property type="entry name" value="S-ADENOSYLMETHIONINE SYNTHETASE"/>
    <property type="match status" value="1"/>
</dbReference>
<dbReference type="Pfam" id="PF02773">
    <property type="entry name" value="S-AdoMet_synt_C"/>
    <property type="match status" value="1"/>
</dbReference>
<dbReference type="Pfam" id="PF02772">
    <property type="entry name" value="S-AdoMet_synt_M"/>
    <property type="match status" value="1"/>
</dbReference>
<dbReference type="Pfam" id="PF00438">
    <property type="entry name" value="S-AdoMet_synt_N"/>
    <property type="match status" value="1"/>
</dbReference>
<dbReference type="PIRSF" id="PIRSF000497">
    <property type="entry name" value="MAT"/>
    <property type="match status" value="1"/>
</dbReference>
<dbReference type="SUPFAM" id="SSF55973">
    <property type="entry name" value="S-adenosylmethionine synthetase"/>
    <property type="match status" value="3"/>
</dbReference>
<dbReference type="PROSITE" id="PS00376">
    <property type="entry name" value="ADOMET_SYNTHASE_1"/>
    <property type="match status" value="1"/>
</dbReference>
<dbReference type="PROSITE" id="PS00377">
    <property type="entry name" value="ADOMET_SYNTHASE_2"/>
    <property type="match status" value="1"/>
</dbReference>
<accession>Q2GBP1</accession>
<reference key="1">
    <citation type="submission" date="2006-01" db="EMBL/GenBank/DDBJ databases">
        <title>Complete sequence of Novosphingobium aromaticivorans DSM 12444.</title>
        <authorList>
            <consortium name="US DOE Joint Genome Institute"/>
            <person name="Copeland A."/>
            <person name="Lucas S."/>
            <person name="Lapidus A."/>
            <person name="Barry K."/>
            <person name="Detter J.C."/>
            <person name="Glavina T."/>
            <person name="Hammon N."/>
            <person name="Israni S."/>
            <person name="Pitluck S."/>
            <person name="Chain P."/>
            <person name="Malfatti S."/>
            <person name="Shin M."/>
            <person name="Vergez L."/>
            <person name="Schmutz J."/>
            <person name="Larimer F."/>
            <person name="Land M."/>
            <person name="Kyrpides N."/>
            <person name="Ivanova N."/>
            <person name="Fredrickson J."/>
            <person name="Balkwill D."/>
            <person name="Romine M.F."/>
            <person name="Richardson P."/>
        </authorList>
    </citation>
    <scope>NUCLEOTIDE SEQUENCE [LARGE SCALE GENOMIC DNA]</scope>
    <source>
        <strain>ATCC 700278 / DSM 12444 / CCUG 56034 / CIP 105152 / NBRC 16084 / F199</strain>
    </source>
</reference>
<protein>
    <recommendedName>
        <fullName evidence="1">S-adenosylmethionine synthase</fullName>
        <shortName evidence="1">AdoMet synthase</shortName>
        <ecNumber evidence="1">2.5.1.6</ecNumber>
    </recommendedName>
    <alternativeName>
        <fullName evidence="1">MAT</fullName>
    </alternativeName>
    <alternativeName>
        <fullName evidence="1">Methionine adenosyltransferase</fullName>
    </alternativeName>
</protein>
<comment type="function">
    <text evidence="1">Catalyzes the formation of S-adenosylmethionine (AdoMet) from methionine and ATP. The overall synthetic reaction is composed of two sequential steps, AdoMet formation and the subsequent tripolyphosphate hydrolysis which occurs prior to release of AdoMet from the enzyme.</text>
</comment>
<comment type="catalytic activity">
    <reaction evidence="1">
        <text>L-methionine + ATP + H2O = S-adenosyl-L-methionine + phosphate + diphosphate</text>
        <dbReference type="Rhea" id="RHEA:21080"/>
        <dbReference type="ChEBI" id="CHEBI:15377"/>
        <dbReference type="ChEBI" id="CHEBI:30616"/>
        <dbReference type="ChEBI" id="CHEBI:33019"/>
        <dbReference type="ChEBI" id="CHEBI:43474"/>
        <dbReference type="ChEBI" id="CHEBI:57844"/>
        <dbReference type="ChEBI" id="CHEBI:59789"/>
        <dbReference type="EC" id="2.5.1.6"/>
    </reaction>
</comment>
<comment type="cofactor">
    <cofactor evidence="1">
        <name>Mg(2+)</name>
        <dbReference type="ChEBI" id="CHEBI:18420"/>
    </cofactor>
    <text evidence="1">Binds 2 divalent ions per subunit.</text>
</comment>
<comment type="cofactor">
    <cofactor evidence="1">
        <name>K(+)</name>
        <dbReference type="ChEBI" id="CHEBI:29103"/>
    </cofactor>
    <text evidence="1">Binds 1 potassium ion per subunit.</text>
</comment>
<comment type="pathway">
    <text evidence="1">Amino-acid biosynthesis; S-adenosyl-L-methionine biosynthesis; S-adenosyl-L-methionine from L-methionine: step 1/1.</text>
</comment>
<comment type="subunit">
    <text evidence="1">Homotetramer; dimer of dimers.</text>
</comment>
<comment type="subcellular location">
    <subcellularLocation>
        <location evidence="1">Cytoplasm</location>
    </subcellularLocation>
</comment>
<comment type="similarity">
    <text evidence="1">Belongs to the AdoMet synthase family.</text>
</comment>
<evidence type="ECO:0000255" key="1">
    <source>
        <dbReference type="HAMAP-Rule" id="MF_00086"/>
    </source>
</evidence>
<organism>
    <name type="scientific">Novosphingobium aromaticivorans (strain ATCC 700278 / DSM 12444 / CCUG 56034 / CIP 105152 / NBRC 16084 / F199)</name>
    <dbReference type="NCBI Taxonomy" id="279238"/>
    <lineage>
        <taxon>Bacteria</taxon>
        <taxon>Pseudomonadati</taxon>
        <taxon>Pseudomonadota</taxon>
        <taxon>Alphaproteobacteria</taxon>
        <taxon>Sphingomonadales</taxon>
        <taxon>Sphingomonadaceae</taxon>
        <taxon>Novosphingobium</taxon>
    </lineage>
</organism>
<name>METK_NOVAD</name>
<sequence length="401" mass="43459">MRTDYLFTSESVSEGHPDKVSDQISDAIVDLFLSKDPEARIACETLTTTQLVVLAGEIRCKGVYENGEWAPGAQDEIEKTVRDTVKRIGYEQDGFHWERLEFINRLHGQSAHIAQGVDAADNKDEGAGDQGIMFGYATDETPDLMPATLYYSHKILERMAADRHSGAAPFLEPDAKSQVTLRYEGSLPVAATAVVVSTQHAPGYDEGGKEAELHEYVKRVVAEVIPPVLLRETKYYINPTGSFEIGGPDGDAGLTGRKIIVDTYGGAAPHGGGAFSGKDPTKVDRSAAYITRYLAKNVVAAGLATRCTIQIAYAIGVSEPLSLYVDTHETGTVGDDKIEQAILGIAKLGGLTPRAIRTHLGLNKPIYRPTAAYGHFGRKADGDFFPWERLDLVDDLKAAFA</sequence>
<proteinExistence type="inferred from homology"/>
<feature type="chain" id="PRO_0000241011" description="S-adenosylmethionine synthase">
    <location>
        <begin position="1"/>
        <end position="401"/>
    </location>
</feature>
<feature type="region of interest" description="Flexible loop" evidence="1">
    <location>
        <begin position="109"/>
        <end position="119"/>
    </location>
</feature>
<feature type="binding site" description="in other chain" evidence="1">
    <location>
        <position position="16"/>
    </location>
    <ligand>
        <name>ATP</name>
        <dbReference type="ChEBI" id="CHEBI:30616"/>
        <note>ligand shared between two neighboring subunits</note>
    </ligand>
</feature>
<feature type="binding site" evidence="1">
    <location>
        <position position="18"/>
    </location>
    <ligand>
        <name>Mg(2+)</name>
        <dbReference type="ChEBI" id="CHEBI:18420"/>
    </ligand>
</feature>
<feature type="binding site" evidence="1">
    <location>
        <position position="44"/>
    </location>
    <ligand>
        <name>K(+)</name>
        <dbReference type="ChEBI" id="CHEBI:29103"/>
    </ligand>
</feature>
<feature type="binding site" description="in other chain" evidence="1">
    <location>
        <position position="57"/>
    </location>
    <ligand>
        <name>L-methionine</name>
        <dbReference type="ChEBI" id="CHEBI:57844"/>
        <note>ligand shared between two neighboring subunits</note>
    </ligand>
</feature>
<feature type="binding site" description="in other chain" evidence="1">
    <location>
        <position position="109"/>
    </location>
    <ligand>
        <name>L-methionine</name>
        <dbReference type="ChEBI" id="CHEBI:57844"/>
        <note>ligand shared between two neighboring subunits</note>
    </ligand>
</feature>
<feature type="binding site" description="in other chain" evidence="1">
    <location>
        <begin position="174"/>
        <end position="176"/>
    </location>
    <ligand>
        <name>ATP</name>
        <dbReference type="ChEBI" id="CHEBI:30616"/>
        <note>ligand shared between two neighboring subunits</note>
    </ligand>
</feature>
<feature type="binding site" evidence="1">
    <location>
        <position position="251"/>
    </location>
    <ligand>
        <name>ATP</name>
        <dbReference type="ChEBI" id="CHEBI:30616"/>
        <note>ligand shared between two neighboring subunits</note>
    </ligand>
</feature>
<feature type="binding site" evidence="1">
    <location>
        <position position="251"/>
    </location>
    <ligand>
        <name>L-methionine</name>
        <dbReference type="ChEBI" id="CHEBI:57844"/>
        <note>ligand shared between two neighboring subunits</note>
    </ligand>
</feature>
<feature type="binding site" description="in other chain" evidence="1">
    <location>
        <begin position="257"/>
        <end position="258"/>
    </location>
    <ligand>
        <name>ATP</name>
        <dbReference type="ChEBI" id="CHEBI:30616"/>
        <note>ligand shared between two neighboring subunits</note>
    </ligand>
</feature>
<feature type="binding site" evidence="1">
    <location>
        <position position="274"/>
    </location>
    <ligand>
        <name>ATP</name>
        <dbReference type="ChEBI" id="CHEBI:30616"/>
        <note>ligand shared between two neighboring subunits</note>
    </ligand>
</feature>
<feature type="binding site" evidence="1">
    <location>
        <position position="278"/>
    </location>
    <ligand>
        <name>ATP</name>
        <dbReference type="ChEBI" id="CHEBI:30616"/>
        <note>ligand shared between two neighboring subunits</note>
    </ligand>
</feature>
<feature type="binding site" description="in other chain" evidence="1">
    <location>
        <position position="282"/>
    </location>
    <ligand>
        <name>L-methionine</name>
        <dbReference type="ChEBI" id="CHEBI:57844"/>
        <note>ligand shared between two neighboring subunits</note>
    </ligand>
</feature>
<keyword id="KW-0067">ATP-binding</keyword>
<keyword id="KW-0963">Cytoplasm</keyword>
<keyword id="KW-0460">Magnesium</keyword>
<keyword id="KW-0479">Metal-binding</keyword>
<keyword id="KW-0547">Nucleotide-binding</keyword>
<keyword id="KW-0554">One-carbon metabolism</keyword>
<keyword id="KW-0630">Potassium</keyword>
<keyword id="KW-1185">Reference proteome</keyword>
<keyword id="KW-0808">Transferase</keyword>
<gene>
    <name evidence="1" type="primary">metK</name>
    <name type="ordered locus">Saro_0284</name>
</gene>